<feature type="chain" id="PRO_0000137330" description="Small ribosomal subunit protein eS6y">
    <location>
        <begin position="1"/>
        <end position="249"/>
    </location>
</feature>
<feature type="region of interest" description="Disordered" evidence="3">
    <location>
        <begin position="219"/>
        <end position="249"/>
    </location>
</feature>
<feature type="compositionally biased region" description="Basic and acidic residues" evidence="3">
    <location>
        <begin position="220"/>
        <end position="233"/>
    </location>
</feature>
<feature type="modified residue" description="Phosphoserine" evidence="1">
    <location>
        <position position="237"/>
    </location>
</feature>
<feature type="sequence conflict" description="In Ref. 1; CAA74381." evidence="5" ref="1">
    <original>D</original>
    <variation>N</variation>
    <location>
        <position position="209"/>
    </location>
</feature>
<feature type="sequence conflict" description="In Ref. 5; CAA81278." evidence="5" ref="5">
    <original>P</original>
    <variation>A</variation>
    <location>
        <position position="243"/>
    </location>
</feature>
<feature type="sequence conflict" description="In Ref. 5." evidence="5" ref="5">
    <original>P</original>
    <variation>PS</variation>
    <location>
        <position position="246"/>
    </location>
</feature>
<feature type="sequence conflict" description="In Ref. 5." evidence="5" ref="5">
    <original>A</original>
    <variation>T</variation>
    <location>
        <position position="248"/>
    </location>
</feature>
<proteinExistence type="evidence at protein level"/>
<dbReference type="EMBL" id="Y14052">
    <property type="protein sequence ID" value="CAA74381.1"/>
    <property type="molecule type" value="mRNA"/>
</dbReference>
<dbReference type="EMBL" id="AL353995">
    <property type="protein sequence ID" value="CAB89407.1"/>
    <property type="molecule type" value="Genomic_DNA"/>
</dbReference>
<dbReference type="EMBL" id="CP002688">
    <property type="protein sequence ID" value="AED91531.1"/>
    <property type="molecule type" value="Genomic_DNA"/>
</dbReference>
<dbReference type="EMBL" id="AY045594">
    <property type="protein sequence ID" value="AAK73952.1"/>
    <property type="molecule type" value="mRNA"/>
</dbReference>
<dbReference type="EMBL" id="AY057634">
    <property type="protein sequence ID" value="AAL15265.1"/>
    <property type="molecule type" value="mRNA"/>
</dbReference>
<dbReference type="EMBL" id="AY093783">
    <property type="protein sequence ID" value="AAM10399.1"/>
    <property type="molecule type" value="mRNA"/>
</dbReference>
<dbReference type="EMBL" id="Z26511">
    <property type="protein sequence ID" value="CAA81278.1"/>
    <property type="molecule type" value="mRNA"/>
</dbReference>
<dbReference type="PIR" id="T50003">
    <property type="entry name" value="T50003"/>
</dbReference>
<dbReference type="RefSeq" id="NP_196598.1">
    <molecule id="P51430-1"/>
    <property type="nucleotide sequence ID" value="NM_121074.5"/>
</dbReference>
<dbReference type="SMR" id="P51430"/>
<dbReference type="BioGRID" id="16178">
    <property type="interactions" value="127"/>
</dbReference>
<dbReference type="FunCoup" id="P51430">
    <property type="interactions" value="3947"/>
</dbReference>
<dbReference type="IntAct" id="P51430">
    <property type="interactions" value="3"/>
</dbReference>
<dbReference type="STRING" id="3702.P51430"/>
<dbReference type="iPTMnet" id="P51430"/>
<dbReference type="PaxDb" id="3702-AT5G10360.1"/>
<dbReference type="ProteomicsDB" id="226557">
    <molecule id="P51430-1"/>
</dbReference>
<dbReference type="EnsemblPlants" id="AT5G10360.1">
    <molecule id="P51430-1"/>
    <property type="protein sequence ID" value="AT5G10360.1"/>
    <property type="gene ID" value="AT5G10360"/>
</dbReference>
<dbReference type="GeneID" id="830900"/>
<dbReference type="Gramene" id="AT5G10360.1">
    <molecule id="P51430-1"/>
    <property type="protein sequence ID" value="AT5G10360.1"/>
    <property type="gene ID" value="AT5G10360"/>
</dbReference>
<dbReference type="KEGG" id="ath:AT5G10360"/>
<dbReference type="Araport" id="AT5G10360"/>
<dbReference type="TAIR" id="AT5G10360">
    <property type="gene designation" value="EMB3010"/>
</dbReference>
<dbReference type="eggNOG" id="KOG1646">
    <property type="taxonomic scope" value="Eukaryota"/>
</dbReference>
<dbReference type="HOGENOM" id="CLU_046346_0_1_1"/>
<dbReference type="InParanoid" id="P51430"/>
<dbReference type="OMA" id="KPRYKAP"/>
<dbReference type="OrthoDB" id="1901524at2759"/>
<dbReference type="PhylomeDB" id="P51430"/>
<dbReference type="CD-CODE" id="4299E36E">
    <property type="entry name" value="Nucleolus"/>
</dbReference>
<dbReference type="PRO" id="PR:P51430"/>
<dbReference type="Proteomes" id="UP000006548">
    <property type="component" value="Chromosome 5"/>
</dbReference>
<dbReference type="ExpressionAtlas" id="P51430">
    <property type="expression patterns" value="baseline and differential"/>
</dbReference>
<dbReference type="GO" id="GO:0022626">
    <property type="term" value="C:cytosolic ribosome"/>
    <property type="evidence" value="ECO:0007005"/>
    <property type="project" value="TAIR"/>
</dbReference>
<dbReference type="GO" id="GO:0022627">
    <property type="term" value="C:cytosolic small ribosomal subunit"/>
    <property type="evidence" value="ECO:0007005"/>
    <property type="project" value="TAIR"/>
</dbReference>
<dbReference type="GO" id="GO:0005886">
    <property type="term" value="C:plasma membrane"/>
    <property type="evidence" value="ECO:0007005"/>
    <property type="project" value="TAIR"/>
</dbReference>
<dbReference type="GO" id="GO:0009506">
    <property type="term" value="C:plasmodesma"/>
    <property type="evidence" value="ECO:0007005"/>
    <property type="project" value="TAIR"/>
</dbReference>
<dbReference type="GO" id="GO:0003729">
    <property type="term" value="F:mRNA binding"/>
    <property type="evidence" value="ECO:0000314"/>
    <property type="project" value="TAIR"/>
</dbReference>
<dbReference type="GO" id="GO:0003735">
    <property type="term" value="F:structural constituent of ribosome"/>
    <property type="evidence" value="ECO:0000314"/>
    <property type="project" value="CAFA"/>
</dbReference>
<dbReference type="GO" id="GO:0006412">
    <property type="term" value="P:translation"/>
    <property type="evidence" value="ECO:0007669"/>
    <property type="project" value="InterPro"/>
</dbReference>
<dbReference type="FunFam" id="1.20.5.2650:FF:000002">
    <property type="entry name" value="40S ribosomal protein S6"/>
    <property type="match status" value="1"/>
</dbReference>
<dbReference type="Gene3D" id="1.20.5.2650">
    <property type="match status" value="1"/>
</dbReference>
<dbReference type="InterPro" id="IPR001377">
    <property type="entry name" value="Ribosomal_eS6"/>
</dbReference>
<dbReference type="InterPro" id="IPR014401">
    <property type="entry name" value="Ribosomal_eS6-like"/>
</dbReference>
<dbReference type="InterPro" id="IPR018282">
    <property type="entry name" value="Ribosomal_eS6_CS"/>
</dbReference>
<dbReference type="PANTHER" id="PTHR11502">
    <property type="entry name" value="40S RIBOSOMAL PROTEIN S6"/>
    <property type="match status" value="1"/>
</dbReference>
<dbReference type="Pfam" id="PF01092">
    <property type="entry name" value="Ribosomal_S6e"/>
    <property type="match status" value="1"/>
</dbReference>
<dbReference type="PIRSF" id="PIRSF002129">
    <property type="entry name" value="Ribosom_S6_euk"/>
    <property type="match status" value="1"/>
</dbReference>
<dbReference type="SMART" id="SM01405">
    <property type="entry name" value="Ribosomal_S6e"/>
    <property type="match status" value="1"/>
</dbReference>
<dbReference type="PROSITE" id="PS00578">
    <property type="entry name" value="RIBOSOMAL_S6E"/>
    <property type="match status" value="1"/>
</dbReference>
<comment type="function">
    <text evidence="2">Component of the 40S small ribosomal subunit (By similarity). Plays an important role in controlling cell growth and proliferation through the selective translation of particular classes of mRNA (By similarity).</text>
</comment>
<comment type="alternative products">
    <event type="alternative splicing"/>
    <isoform>
        <id>P51430-1</id>
        <name>1</name>
        <sequence type="displayed"/>
    </isoform>
    <text>A number of isoforms are produced. According to EST sequences.</text>
</comment>
<comment type="PTM">
    <text evidence="2">Ribosomal protein S6 is the major substrate of protein kinases in eukaryote ribosomes.</text>
</comment>
<comment type="similarity">
    <text evidence="5">Belongs to the eukaryotic ribosomal protein eS6 family.</text>
</comment>
<reference key="1">
    <citation type="journal article" date="1998" name="Mol. Cell. Biol.">
        <title>A heat-sensitive Arabidopsis thaliana kinase substitutes for human p70s6k function in vivo.</title>
        <authorList>
            <person name="Turck F."/>
            <person name="Kozma S.C."/>
            <person name="Thomas G."/>
            <person name="Nagy F."/>
        </authorList>
    </citation>
    <scope>NUCLEOTIDE SEQUENCE [MRNA]</scope>
    <source>
        <strain>cv. Columbia</strain>
    </source>
</reference>
<reference key="2">
    <citation type="journal article" date="2000" name="Nature">
        <title>Sequence and analysis of chromosome 5 of the plant Arabidopsis thaliana.</title>
        <authorList>
            <person name="Tabata S."/>
            <person name="Kaneko T."/>
            <person name="Nakamura Y."/>
            <person name="Kotani H."/>
            <person name="Kato T."/>
            <person name="Asamizu E."/>
            <person name="Miyajima N."/>
            <person name="Sasamoto S."/>
            <person name="Kimura T."/>
            <person name="Hosouchi T."/>
            <person name="Kawashima K."/>
            <person name="Kohara M."/>
            <person name="Matsumoto M."/>
            <person name="Matsuno A."/>
            <person name="Muraki A."/>
            <person name="Nakayama S."/>
            <person name="Nakazaki N."/>
            <person name="Naruo K."/>
            <person name="Okumura S."/>
            <person name="Shinpo S."/>
            <person name="Takeuchi C."/>
            <person name="Wada T."/>
            <person name="Watanabe A."/>
            <person name="Yamada M."/>
            <person name="Yasuda M."/>
            <person name="Sato S."/>
            <person name="de la Bastide M."/>
            <person name="Huang E."/>
            <person name="Spiegel L."/>
            <person name="Gnoj L."/>
            <person name="O'Shaughnessy A."/>
            <person name="Preston R."/>
            <person name="Habermann K."/>
            <person name="Murray J."/>
            <person name="Johnson D."/>
            <person name="Rohlfing T."/>
            <person name="Nelson J."/>
            <person name="Stoneking T."/>
            <person name="Pepin K."/>
            <person name="Spieth J."/>
            <person name="Sekhon M."/>
            <person name="Armstrong J."/>
            <person name="Becker M."/>
            <person name="Belter E."/>
            <person name="Cordum H."/>
            <person name="Cordes M."/>
            <person name="Courtney L."/>
            <person name="Courtney W."/>
            <person name="Dante M."/>
            <person name="Du H."/>
            <person name="Edwards J."/>
            <person name="Fryman J."/>
            <person name="Haakensen B."/>
            <person name="Lamar E."/>
            <person name="Latreille P."/>
            <person name="Leonard S."/>
            <person name="Meyer R."/>
            <person name="Mulvaney E."/>
            <person name="Ozersky P."/>
            <person name="Riley A."/>
            <person name="Strowmatt C."/>
            <person name="Wagner-McPherson C."/>
            <person name="Wollam A."/>
            <person name="Yoakum M."/>
            <person name="Bell M."/>
            <person name="Dedhia N."/>
            <person name="Parnell L."/>
            <person name="Shah R."/>
            <person name="Rodriguez M."/>
            <person name="Hoon See L."/>
            <person name="Vil D."/>
            <person name="Baker J."/>
            <person name="Kirchoff K."/>
            <person name="Toth K."/>
            <person name="King L."/>
            <person name="Bahret A."/>
            <person name="Miller B."/>
            <person name="Marra M.A."/>
            <person name="Martienssen R."/>
            <person name="McCombie W.R."/>
            <person name="Wilson R.K."/>
            <person name="Murphy G."/>
            <person name="Bancroft I."/>
            <person name="Volckaert G."/>
            <person name="Wambutt R."/>
            <person name="Duesterhoeft A."/>
            <person name="Stiekema W."/>
            <person name="Pohl T."/>
            <person name="Entian K.-D."/>
            <person name="Terryn N."/>
            <person name="Hartley N."/>
            <person name="Bent E."/>
            <person name="Johnson S."/>
            <person name="Langham S.-A."/>
            <person name="McCullagh B."/>
            <person name="Robben J."/>
            <person name="Grymonprez B."/>
            <person name="Zimmermann W."/>
            <person name="Ramsperger U."/>
            <person name="Wedler H."/>
            <person name="Balke K."/>
            <person name="Wedler E."/>
            <person name="Peters S."/>
            <person name="van Staveren M."/>
            <person name="Dirkse W."/>
            <person name="Mooijman P."/>
            <person name="Klein Lankhorst R."/>
            <person name="Weitzenegger T."/>
            <person name="Bothe G."/>
            <person name="Rose M."/>
            <person name="Hauf J."/>
            <person name="Berneiser S."/>
            <person name="Hempel S."/>
            <person name="Feldpausch M."/>
            <person name="Lamberth S."/>
            <person name="Villarroel R."/>
            <person name="Gielen J."/>
            <person name="Ardiles W."/>
            <person name="Bents O."/>
            <person name="Lemcke K."/>
            <person name="Kolesov G."/>
            <person name="Mayer K.F.X."/>
            <person name="Rudd S."/>
            <person name="Schoof H."/>
            <person name="Schueller C."/>
            <person name="Zaccaria P."/>
            <person name="Mewes H.-W."/>
            <person name="Bevan M."/>
            <person name="Fransz P.F."/>
        </authorList>
    </citation>
    <scope>NUCLEOTIDE SEQUENCE [LARGE SCALE GENOMIC DNA]</scope>
    <source>
        <strain>cv. Columbia</strain>
    </source>
</reference>
<reference key="3">
    <citation type="journal article" date="2017" name="Plant J.">
        <title>Araport11: a complete reannotation of the Arabidopsis thaliana reference genome.</title>
        <authorList>
            <person name="Cheng C.Y."/>
            <person name="Krishnakumar V."/>
            <person name="Chan A.P."/>
            <person name="Thibaud-Nissen F."/>
            <person name="Schobel S."/>
            <person name="Town C.D."/>
        </authorList>
    </citation>
    <scope>GENOME REANNOTATION</scope>
    <source>
        <strain>cv. Columbia</strain>
    </source>
</reference>
<reference key="4">
    <citation type="journal article" date="2003" name="Science">
        <title>Empirical analysis of transcriptional activity in the Arabidopsis genome.</title>
        <authorList>
            <person name="Yamada K."/>
            <person name="Lim J."/>
            <person name="Dale J.M."/>
            <person name="Chen H."/>
            <person name="Shinn P."/>
            <person name="Palm C.J."/>
            <person name="Southwick A.M."/>
            <person name="Wu H.C."/>
            <person name="Kim C.J."/>
            <person name="Nguyen M."/>
            <person name="Pham P.K."/>
            <person name="Cheuk R.F."/>
            <person name="Karlin-Newmann G."/>
            <person name="Liu S.X."/>
            <person name="Lam B."/>
            <person name="Sakano H."/>
            <person name="Wu T."/>
            <person name="Yu G."/>
            <person name="Miranda M."/>
            <person name="Quach H.L."/>
            <person name="Tripp M."/>
            <person name="Chang C.H."/>
            <person name="Lee J.M."/>
            <person name="Toriumi M.J."/>
            <person name="Chan M.M."/>
            <person name="Tang C.C."/>
            <person name="Onodera C.S."/>
            <person name="Deng J.M."/>
            <person name="Akiyama K."/>
            <person name="Ansari Y."/>
            <person name="Arakawa T."/>
            <person name="Banh J."/>
            <person name="Banno F."/>
            <person name="Bowser L."/>
            <person name="Brooks S.Y."/>
            <person name="Carninci P."/>
            <person name="Chao Q."/>
            <person name="Choy N."/>
            <person name="Enju A."/>
            <person name="Goldsmith A.D."/>
            <person name="Gurjal M."/>
            <person name="Hansen N.F."/>
            <person name="Hayashizaki Y."/>
            <person name="Johnson-Hopson C."/>
            <person name="Hsuan V.W."/>
            <person name="Iida K."/>
            <person name="Karnes M."/>
            <person name="Khan S."/>
            <person name="Koesema E."/>
            <person name="Ishida J."/>
            <person name="Jiang P.X."/>
            <person name="Jones T."/>
            <person name="Kawai J."/>
            <person name="Kamiya A."/>
            <person name="Meyers C."/>
            <person name="Nakajima M."/>
            <person name="Narusaka M."/>
            <person name="Seki M."/>
            <person name="Sakurai T."/>
            <person name="Satou M."/>
            <person name="Tamse R."/>
            <person name="Vaysberg M."/>
            <person name="Wallender E.K."/>
            <person name="Wong C."/>
            <person name="Yamamura Y."/>
            <person name="Yuan S."/>
            <person name="Shinozaki K."/>
            <person name="Davis R.W."/>
            <person name="Theologis A."/>
            <person name="Ecker J.R."/>
        </authorList>
    </citation>
    <scope>NUCLEOTIDE SEQUENCE [LARGE SCALE MRNA]</scope>
    <source>
        <strain>cv. Columbia</strain>
    </source>
</reference>
<reference key="5">
    <citation type="journal article" date="1996" name="Plant J.">
        <title>Further progress towards a catalogue of all Arabidopsis genes: analysis of a set of 5000 non-redundant ESTs.</title>
        <authorList>
            <person name="Cooke R."/>
            <person name="Raynal M."/>
            <person name="Laudie M."/>
            <person name="Grellet F."/>
            <person name="Delseny M."/>
            <person name="Morris P.-C."/>
            <person name="Guerrier D."/>
            <person name="Giraudat J."/>
            <person name="Quigley F."/>
            <person name="Clabault G."/>
            <person name="Li Y.-F."/>
            <person name="Mache R."/>
            <person name="Krivitzky M."/>
            <person name="Gy I.J.-J."/>
            <person name="Kreis M."/>
            <person name="Lecharny A."/>
            <person name="Parmentier Y."/>
            <person name="Marbach J."/>
            <person name="Fleck J."/>
            <person name="Clement B."/>
            <person name="Philipps G."/>
            <person name="Herve C."/>
            <person name="Bardet C."/>
            <person name="Tremousaygue D."/>
            <person name="Lescure B."/>
            <person name="Lacomme C."/>
            <person name="Roby D."/>
            <person name="Jourjon M.-F."/>
            <person name="Chabrier P."/>
            <person name="Charpenteau J.-L."/>
            <person name="Desprez T."/>
            <person name="Amselem J."/>
            <person name="Chiapello H."/>
            <person name="Hoefte H."/>
        </authorList>
    </citation>
    <scope>NUCLEOTIDE SEQUENCE [LARGE SCALE MRNA] OF 203-249</scope>
    <source>
        <strain>cv. Columbia</strain>
        <tissue>Seedling</tissue>
    </source>
</reference>
<reference key="6">
    <citation type="journal article" date="2001" name="Plant Physiol.">
        <title>The organization of cytoplasmic ribosomal protein genes in the Arabidopsis genome.</title>
        <authorList>
            <person name="Barakat A."/>
            <person name="Szick-Miranda K."/>
            <person name="Chang I.-F."/>
            <person name="Guyot R."/>
            <person name="Blanc G."/>
            <person name="Cooke R."/>
            <person name="Delseny M."/>
            <person name="Bailey-Serres J."/>
        </authorList>
    </citation>
    <scope>GENE FAMILY ORGANIZATION</scope>
    <scope>NOMENCLATURE</scope>
</reference>
<reference key="7">
    <citation type="journal article" date="2009" name="J. Proteomics">
        <title>Phosphoproteomic analysis of nuclei-enriched fractions from Arabidopsis thaliana.</title>
        <authorList>
            <person name="Jones A.M.E."/>
            <person name="MacLean D."/>
            <person name="Studholme D.J."/>
            <person name="Serna-Sanz A."/>
            <person name="Andreasson E."/>
            <person name="Rathjen J.P."/>
            <person name="Peck S.C."/>
        </authorList>
    </citation>
    <scope>IDENTIFICATION BY MASS SPECTROMETRY [LARGE SCALE ANALYSIS]</scope>
    <source>
        <strain>cv. Columbia</strain>
    </source>
</reference>
<reference key="8">
    <citation type="journal article" date="2009" name="Plant Physiol.">
        <title>Large-scale Arabidopsis phosphoproteome profiling reveals novel chloroplast kinase substrates and phosphorylation networks.</title>
        <authorList>
            <person name="Reiland S."/>
            <person name="Messerli G."/>
            <person name="Baerenfaller K."/>
            <person name="Gerrits B."/>
            <person name="Endler A."/>
            <person name="Grossmann J."/>
            <person name="Gruissem W."/>
            <person name="Baginsky S."/>
        </authorList>
    </citation>
    <scope>IDENTIFICATION BY MASS SPECTROMETRY [LARGE SCALE ANALYSIS]</scope>
</reference>
<reference key="9">
    <citation type="journal article" date="2023" name="Plant Cell">
        <title>An updated nomenclature for plant ribosomal protein genes.</title>
        <authorList>
            <person name="Scarpin M.R."/>
            <person name="Busche M."/>
            <person name="Martinez R.E."/>
            <person name="Harper L.C."/>
            <person name="Reiser L."/>
            <person name="Szakonyi D."/>
            <person name="Merchante C."/>
            <person name="Lan T."/>
            <person name="Xiong W."/>
            <person name="Mo B."/>
            <person name="Tang G."/>
            <person name="Chen X."/>
            <person name="Bailey-Serres J."/>
            <person name="Browning K.S."/>
            <person name="Brunkard J.O."/>
        </authorList>
    </citation>
    <scope>NOMENCLATURE</scope>
</reference>
<evidence type="ECO:0000250" key="1">
    <source>
        <dbReference type="UniProtKB" id="O48549"/>
    </source>
</evidence>
<evidence type="ECO:0000250" key="2">
    <source>
        <dbReference type="UniProtKB" id="P62753"/>
    </source>
</evidence>
<evidence type="ECO:0000256" key="3">
    <source>
        <dbReference type="SAM" id="MobiDB-lite"/>
    </source>
</evidence>
<evidence type="ECO:0000303" key="4">
    <source>
    </source>
</evidence>
<evidence type="ECO:0000305" key="5"/>
<sequence>MKFNVANPTTGCQKKLEIDDDQKLRAFFDKRLSQEVSGDALGEEFKGYVFKIMGGCDKQGFPMKQGVLTPGRVRLLLHRGTPCFRGHGRRTGERRRKSVRGCIVSPDLSVLNLVIVKKGVSDLPGLTDTEKPRMRGPKRASKIRKLFNLGKEDDVRKYVNTYRRTFTNKKGKKVSKAPKIQRLVTPLTLQRKRARIADKKKRIAKANSDAADYQKLLASRLKEQRDRRSESLAKKRSRLSSAPAKPVAA</sequence>
<accession>P51430</accession>
<accession>O04670</accession>
<accession>Q9LX91</accession>
<protein>
    <recommendedName>
        <fullName evidence="4">Small ribosomal subunit protein eS6y</fullName>
    </recommendedName>
    <alternativeName>
        <fullName>40S ribosomal protein S6-2</fullName>
    </alternativeName>
    <alternativeName>
        <fullName>Protein EMBRYO DEFECTIVE 3010</fullName>
    </alternativeName>
</protein>
<gene>
    <name type="primary">RPS6B</name>
    <name type="synonym">EMB3010</name>
    <name type="synonym">RPS6</name>
    <name type="ordered locus">At5g10360</name>
    <name type="ORF">F12B17_290</name>
</gene>
<organism>
    <name type="scientific">Arabidopsis thaliana</name>
    <name type="common">Mouse-ear cress</name>
    <dbReference type="NCBI Taxonomy" id="3702"/>
    <lineage>
        <taxon>Eukaryota</taxon>
        <taxon>Viridiplantae</taxon>
        <taxon>Streptophyta</taxon>
        <taxon>Embryophyta</taxon>
        <taxon>Tracheophyta</taxon>
        <taxon>Spermatophyta</taxon>
        <taxon>Magnoliopsida</taxon>
        <taxon>eudicotyledons</taxon>
        <taxon>Gunneridae</taxon>
        <taxon>Pentapetalae</taxon>
        <taxon>rosids</taxon>
        <taxon>malvids</taxon>
        <taxon>Brassicales</taxon>
        <taxon>Brassicaceae</taxon>
        <taxon>Camelineae</taxon>
        <taxon>Arabidopsis</taxon>
    </lineage>
</organism>
<name>RS62_ARATH</name>
<keyword id="KW-0025">Alternative splicing</keyword>
<keyword id="KW-0597">Phosphoprotein</keyword>
<keyword id="KW-1185">Reference proteome</keyword>
<keyword id="KW-0687">Ribonucleoprotein</keyword>
<keyword id="KW-0689">Ribosomal protein</keyword>